<accession>Q58992</accession>
<gene>
    <name evidence="1" type="primary">glyA</name>
    <name type="ordered locus">MJ1597</name>
</gene>
<feature type="chain" id="PRO_0000113713" description="Serine hydroxymethyltransferase">
    <location>
        <begin position="1"/>
        <end position="429"/>
    </location>
</feature>
<feature type="binding site" evidence="1">
    <location>
        <begin position="120"/>
        <end position="122"/>
    </location>
    <ligand>
        <name>(6S)-5,6,7,8-tetrahydrofolate</name>
        <dbReference type="ChEBI" id="CHEBI:57453"/>
    </ligand>
</feature>
<feature type="site" description="Plays an important role in substrate specificity" evidence="1">
    <location>
        <position position="225"/>
    </location>
</feature>
<feature type="modified residue" description="N6-(pyridoxal phosphate)lysine" evidence="1">
    <location>
        <position position="226"/>
    </location>
</feature>
<feature type="helix" evidence="5">
    <location>
        <begin position="3"/>
        <end position="5"/>
    </location>
</feature>
<feature type="helix" evidence="4">
    <location>
        <begin position="6"/>
        <end position="22"/>
    </location>
</feature>
<feature type="strand" evidence="4">
    <location>
        <begin position="24"/>
        <end position="26"/>
    </location>
</feature>
<feature type="helix" evidence="4">
    <location>
        <begin position="36"/>
        <end position="43"/>
    </location>
</feature>
<feature type="helix" evidence="5">
    <location>
        <begin position="45"/>
        <end position="47"/>
    </location>
</feature>
<feature type="strand" evidence="5">
    <location>
        <begin position="60"/>
        <end position="62"/>
    </location>
</feature>
<feature type="helix" evidence="4">
    <location>
        <begin position="65"/>
        <end position="81"/>
    </location>
</feature>
<feature type="strand" evidence="4">
    <location>
        <begin position="84"/>
        <end position="87"/>
    </location>
</feature>
<feature type="helix" evidence="4">
    <location>
        <begin position="93"/>
        <end position="104"/>
    </location>
</feature>
<feature type="strand" evidence="4">
    <location>
        <begin position="111"/>
        <end position="113"/>
    </location>
</feature>
<feature type="turn" evidence="4">
    <location>
        <begin position="116"/>
        <end position="119"/>
    </location>
</feature>
<feature type="helix" evidence="4">
    <location>
        <begin position="122"/>
        <end position="124"/>
    </location>
</feature>
<feature type="turn" evidence="4">
    <location>
        <begin position="130"/>
        <end position="132"/>
    </location>
</feature>
<feature type="strand" evidence="4">
    <location>
        <begin position="137"/>
        <end position="139"/>
    </location>
</feature>
<feature type="turn" evidence="4">
    <location>
        <begin position="144"/>
        <end position="147"/>
    </location>
</feature>
<feature type="helix" evidence="4">
    <location>
        <begin position="151"/>
        <end position="161"/>
    </location>
</feature>
<feature type="strand" evidence="4">
    <location>
        <begin position="164"/>
        <end position="168"/>
    </location>
</feature>
<feature type="helix" evidence="4">
    <location>
        <begin position="179"/>
        <end position="189"/>
    </location>
</feature>
<feature type="strand" evidence="4">
    <location>
        <begin position="192"/>
        <end position="196"/>
    </location>
</feature>
<feature type="turn" evidence="4">
    <location>
        <begin position="198"/>
        <end position="200"/>
    </location>
</feature>
<feature type="helix" evidence="4">
    <location>
        <begin position="201"/>
        <end position="205"/>
    </location>
</feature>
<feature type="helix" evidence="4">
    <location>
        <begin position="212"/>
        <end position="214"/>
    </location>
</feature>
<feature type="strand" evidence="4">
    <location>
        <begin position="218"/>
        <end position="223"/>
    </location>
</feature>
<feature type="strand" evidence="4">
    <location>
        <begin position="226"/>
        <end position="228"/>
    </location>
</feature>
<feature type="strand" evidence="4">
    <location>
        <begin position="234"/>
        <end position="238"/>
    </location>
</feature>
<feature type="helix" evidence="4">
    <location>
        <begin position="240"/>
        <end position="249"/>
    </location>
</feature>
<feature type="strand" evidence="5">
    <location>
        <begin position="250"/>
        <end position="254"/>
    </location>
</feature>
<feature type="helix" evidence="4">
    <location>
        <begin position="262"/>
        <end position="296"/>
    </location>
</feature>
<feature type="turn" evidence="4">
    <location>
        <begin position="297"/>
        <end position="299"/>
    </location>
</feature>
<feature type="helix" evidence="4">
    <location>
        <begin position="305"/>
        <end position="307"/>
    </location>
</feature>
<feature type="strand" evidence="4">
    <location>
        <begin position="311"/>
        <end position="319"/>
    </location>
</feature>
<feature type="turn" evidence="4">
    <location>
        <begin position="323"/>
        <end position="325"/>
    </location>
</feature>
<feature type="helix" evidence="4">
    <location>
        <begin position="329"/>
        <end position="338"/>
    </location>
</feature>
<feature type="strand" evidence="4">
    <location>
        <begin position="344"/>
        <end position="346"/>
    </location>
</feature>
<feature type="strand" evidence="4">
    <location>
        <begin position="360"/>
        <end position="365"/>
    </location>
</feature>
<feature type="helix" evidence="4">
    <location>
        <begin position="367"/>
        <end position="371"/>
    </location>
</feature>
<feature type="helix" evidence="4">
    <location>
        <begin position="376"/>
        <end position="390"/>
    </location>
</feature>
<feature type="helix" evidence="4">
    <location>
        <begin position="396"/>
        <end position="408"/>
    </location>
</feature>
<feature type="strand" evidence="4">
    <location>
        <begin position="415"/>
        <end position="418"/>
    </location>
</feature>
<feature type="strand" evidence="5">
    <location>
        <begin position="421"/>
        <end position="423"/>
    </location>
</feature>
<comment type="function">
    <text evidence="2">Catalyzes the reversible interconversion of serine and glycine with tetrahydromethanopterin (H4MPT) serving as the one-carbon carrier. The use of tetrahydrofolate (THF or H4PteGlu) as the pteridine substrate is 450-fold less efficient than that of H4MPT. Also exhibits a pteridine-independent aldolase activity toward beta-hydroxyamino acids, producing glycine and aldehydes, via a retro-aldol mechanism. Thus, is able to catalyze the cleavage of L-allo-threonine and L-threo-beta-phenylserine.</text>
</comment>
<comment type="catalytic activity">
    <reaction evidence="1 2">
        <text>5,10-methylenetetrahydromethanopterin + glycine + H2O = 5,6,7,8-tetrahydromethanopterin + L-serine</text>
        <dbReference type="Rhea" id="RHEA:47104"/>
        <dbReference type="ChEBI" id="CHEBI:15377"/>
        <dbReference type="ChEBI" id="CHEBI:33384"/>
        <dbReference type="ChEBI" id="CHEBI:57305"/>
        <dbReference type="ChEBI" id="CHEBI:57818"/>
        <dbReference type="ChEBI" id="CHEBI:58103"/>
    </reaction>
</comment>
<comment type="catalytic activity">
    <reaction>
        <text>L-allo-threonine = acetaldehyde + glycine</text>
        <dbReference type="Rhea" id="RHEA:26209"/>
        <dbReference type="ChEBI" id="CHEBI:15343"/>
        <dbReference type="ChEBI" id="CHEBI:57305"/>
        <dbReference type="ChEBI" id="CHEBI:58585"/>
        <dbReference type="EC" id="4.1.2.49"/>
    </reaction>
</comment>
<comment type="cofactor">
    <cofactor evidence="1 2">
        <name>pyridoxal 5'-phosphate</name>
        <dbReference type="ChEBI" id="CHEBI:597326"/>
    </cofactor>
</comment>
<comment type="biophysicochemical properties">
    <kinetics>
        <KM evidence="2">0.8 mM for L-serine (at 37 degrees Celsius)</KM>
        <KM evidence="2">0.1 mM for tetrahydromethanopterin (at 37 degrees Celsius)</KM>
        <KM evidence="2">1.3 mM for L-allo-threonine (at 60 degrees Celsius)</KM>
        <KM evidence="2">95 mM for DL-threo-beta-phenylserine (at 60 degrees Celsius)</KM>
        <text>kcat is 212 min(-1) for the L-serine hydroxymethyltransferase reaction, and 687 min(-1) for the L-allo-threonine cleavage, at 37 and 60 degrees Celsius, respectively. The presence of oxygen does not seem to affect significantly the kinetic parameters of the reactions.</text>
    </kinetics>
    <temperatureDependence>
        <text evidence="2">Optimum temperature is 70-80 degrees Celsius for the retro-aldol cleavage of L-allo-threonine.</text>
    </temperatureDependence>
</comment>
<comment type="pathway">
    <text evidence="1">Amino-acid biosynthesis; glycine biosynthesis; glycine from L-serine: step 1/1.</text>
</comment>
<comment type="subunit">
    <text evidence="1 2">Homodimer.</text>
</comment>
<comment type="subcellular location">
    <subcellularLocation>
        <location evidence="1">Cytoplasm</location>
    </subcellularLocation>
</comment>
<comment type="similarity">
    <text evidence="1 3">Belongs to the SHMT family.</text>
</comment>
<keyword id="KW-0002">3D-structure</keyword>
<keyword id="KW-0028">Amino-acid biosynthesis</keyword>
<keyword id="KW-0963">Cytoplasm</keyword>
<keyword id="KW-0456">Lyase</keyword>
<keyword id="KW-0554">One-carbon metabolism</keyword>
<keyword id="KW-0663">Pyridoxal phosphate</keyword>
<keyword id="KW-1185">Reference proteome</keyword>
<keyword id="KW-0808">Transferase</keyword>
<name>GLYA_METJA</name>
<organism>
    <name type="scientific">Methanocaldococcus jannaschii (strain ATCC 43067 / DSM 2661 / JAL-1 / JCM 10045 / NBRC 100440)</name>
    <name type="common">Methanococcus jannaschii</name>
    <dbReference type="NCBI Taxonomy" id="243232"/>
    <lineage>
        <taxon>Archaea</taxon>
        <taxon>Methanobacteriati</taxon>
        <taxon>Methanobacteriota</taxon>
        <taxon>Methanomada group</taxon>
        <taxon>Methanococci</taxon>
        <taxon>Methanococcales</taxon>
        <taxon>Methanocaldococcaceae</taxon>
        <taxon>Methanocaldococcus</taxon>
    </lineage>
</organism>
<sequence>MEYSDVPKFIRDVSIKQHEWMRESIKLIASENITSLAVREACATDFMHRYAEGLPGKRLYQGCKYIDEVETLCIELSKELFKAEHANVQPTSGVVANLAVFFAETKPGDKLMALSVPDGGHISHWKVSAAGIRGLKVINHPFDPEEMNIDADAMVKKILEEKPKLILFGGSLFPFPHPVADAYEAAQEVGAKIAYDGAHVLGLIAGKQFQDPLREGAEYLMGSTHKTFFGPQGGVILTTKENADKIDSHVFPGVVSNHHLHHKAGLAIALAEMLEFGEAYAKQVIKNAKALAQALYERGFNVLCEHKDFTESHQVIIDIESSPDIEFSASELAKMYEEANIILNKNLLPWDDVNNSDNPSGIRLGTQECTRLGMKEKEMEEIAEFMKRIAIDKEKPEKVREDVKEFAKEYSTIHYSFDEGDGFKYLRFY</sequence>
<evidence type="ECO:0000255" key="1">
    <source>
        <dbReference type="HAMAP-Rule" id="MF_00051"/>
    </source>
</evidence>
<evidence type="ECO:0000269" key="2">
    <source>
    </source>
</evidence>
<evidence type="ECO:0000305" key="3"/>
<evidence type="ECO:0007829" key="4">
    <source>
        <dbReference type="PDB" id="4BHD"/>
    </source>
</evidence>
<evidence type="ECO:0007829" key="5">
    <source>
        <dbReference type="PDB" id="4UQV"/>
    </source>
</evidence>
<dbReference type="EC" id="2.1.2.-" evidence="1 2"/>
<dbReference type="EC" id="4.1.2.49"/>
<dbReference type="EMBL" id="L77117">
    <property type="protein sequence ID" value="AAB99615.1"/>
    <property type="molecule type" value="Genomic_DNA"/>
</dbReference>
<dbReference type="PIR" id="D64499">
    <property type="entry name" value="D64499"/>
</dbReference>
<dbReference type="RefSeq" id="WP_010871121.1">
    <property type="nucleotide sequence ID" value="NC_000909.1"/>
</dbReference>
<dbReference type="PDB" id="4BHD">
    <property type="method" value="X-ray"/>
    <property type="resolution" value="2.83 A"/>
    <property type="chains" value="A/B=3-429"/>
</dbReference>
<dbReference type="PDB" id="4UQV">
    <property type="method" value="X-ray"/>
    <property type="resolution" value="3.00 A"/>
    <property type="chains" value="A/B/C/D/E/F/G/H/I/J/K/L=1-429"/>
</dbReference>
<dbReference type="PDBsum" id="4BHD"/>
<dbReference type="PDBsum" id="4UQV"/>
<dbReference type="SMR" id="Q58992"/>
<dbReference type="FunCoup" id="Q58992">
    <property type="interactions" value="371"/>
</dbReference>
<dbReference type="STRING" id="243232.MJ_1597"/>
<dbReference type="PaxDb" id="243232-MJ_1597"/>
<dbReference type="EnsemblBacteria" id="AAB99615">
    <property type="protein sequence ID" value="AAB99615"/>
    <property type="gene ID" value="MJ_1597"/>
</dbReference>
<dbReference type="GeneID" id="1452505"/>
<dbReference type="KEGG" id="mja:MJ_1597"/>
<dbReference type="eggNOG" id="arCOG00070">
    <property type="taxonomic scope" value="Archaea"/>
</dbReference>
<dbReference type="HOGENOM" id="CLU_022477_2_1_2"/>
<dbReference type="InParanoid" id="Q58992"/>
<dbReference type="OrthoDB" id="5821at2157"/>
<dbReference type="PhylomeDB" id="Q58992"/>
<dbReference type="BRENDA" id="2.1.2.1">
    <property type="organism ID" value="3260"/>
</dbReference>
<dbReference type="UniPathway" id="UPA00288">
    <property type="reaction ID" value="UER01023"/>
</dbReference>
<dbReference type="EvolutionaryTrace" id="Q58992"/>
<dbReference type="Proteomes" id="UP000000805">
    <property type="component" value="Chromosome"/>
</dbReference>
<dbReference type="GO" id="GO:0005737">
    <property type="term" value="C:cytoplasm"/>
    <property type="evidence" value="ECO:0000318"/>
    <property type="project" value="GO_Central"/>
</dbReference>
<dbReference type="GO" id="GO:0004372">
    <property type="term" value="F:glycine hydroxymethyltransferase activity"/>
    <property type="evidence" value="ECO:0000318"/>
    <property type="project" value="GO_Central"/>
</dbReference>
<dbReference type="GO" id="GO:0008732">
    <property type="term" value="F:L-allo-threonine aldolase activity"/>
    <property type="evidence" value="ECO:0007669"/>
    <property type="project" value="UniProtKB-EC"/>
</dbReference>
<dbReference type="GO" id="GO:0030170">
    <property type="term" value="F:pyridoxal phosphate binding"/>
    <property type="evidence" value="ECO:0000318"/>
    <property type="project" value="GO_Central"/>
</dbReference>
<dbReference type="GO" id="GO:0019264">
    <property type="term" value="P:glycine biosynthetic process from serine"/>
    <property type="evidence" value="ECO:0000318"/>
    <property type="project" value="GO_Central"/>
</dbReference>
<dbReference type="GO" id="GO:0035999">
    <property type="term" value="P:tetrahydrofolate interconversion"/>
    <property type="evidence" value="ECO:0007669"/>
    <property type="project" value="InterPro"/>
</dbReference>
<dbReference type="GO" id="GO:0046653">
    <property type="term" value="P:tetrahydrofolate metabolic process"/>
    <property type="evidence" value="ECO:0000318"/>
    <property type="project" value="GO_Central"/>
</dbReference>
<dbReference type="CDD" id="cd00378">
    <property type="entry name" value="SHMT"/>
    <property type="match status" value="1"/>
</dbReference>
<dbReference type="FunFam" id="3.40.640.10:FF:000101">
    <property type="entry name" value="Serine hydroxymethyltransferase"/>
    <property type="match status" value="1"/>
</dbReference>
<dbReference type="FunFam" id="3.90.1150.10:FF:000136">
    <property type="entry name" value="Serine hydroxymethyltransferase"/>
    <property type="match status" value="1"/>
</dbReference>
<dbReference type="Gene3D" id="3.90.1150.10">
    <property type="entry name" value="Aspartate Aminotransferase, domain 1"/>
    <property type="match status" value="1"/>
</dbReference>
<dbReference type="Gene3D" id="3.40.640.10">
    <property type="entry name" value="Type I PLP-dependent aspartate aminotransferase-like (Major domain)"/>
    <property type="match status" value="1"/>
</dbReference>
<dbReference type="HAMAP" id="MF_00051">
    <property type="entry name" value="SHMT"/>
    <property type="match status" value="1"/>
</dbReference>
<dbReference type="InterPro" id="IPR015424">
    <property type="entry name" value="PyrdxlP-dep_Trfase"/>
</dbReference>
<dbReference type="InterPro" id="IPR015421">
    <property type="entry name" value="PyrdxlP-dep_Trfase_major"/>
</dbReference>
<dbReference type="InterPro" id="IPR015422">
    <property type="entry name" value="PyrdxlP-dep_Trfase_small"/>
</dbReference>
<dbReference type="InterPro" id="IPR001085">
    <property type="entry name" value="Ser_HO-MeTrfase"/>
</dbReference>
<dbReference type="InterPro" id="IPR049943">
    <property type="entry name" value="Ser_HO-MeTrfase-like"/>
</dbReference>
<dbReference type="InterPro" id="IPR019798">
    <property type="entry name" value="Ser_HO-MeTrfase_PLP_BS"/>
</dbReference>
<dbReference type="InterPro" id="IPR039429">
    <property type="entry name" value="SHMT-like_dom"/>
</dbReference>
<dbReference type="NCBIfam" id="NF000586">
    <property type="entry name" value="PRK00011.1"/>
    <property type="match status" value="1"/>
</dbReference>
<dbReference type="PANTHER" id="PTHR11680">
    <property type="entry name" value="SERINE HYDROXYMETHYLTRANSFERASE"/>
    <property type="match status" value="1"/>
</dbReference>
<dbReference type="PANTHER" id="PTHR11680:SF35">
    <property type="entry name" value="SERINE HYDROXYMETHYLTRANSFERASE 1"/>
    <property type="match status" value="1"/>
</dbReference>
<dbReference type="Pfam" id="PF00464">
    <property type="entry name" value="SHMT"/>
    <property type="match status" value="1"/>
</dbReference>
<dbReference type="PIRSF" id="PIRSF000412">
    <property type="entry name" value="SHMT"/>
    <property type="match status" value="1"/>
</dbReference>
<dbReference type="SUPFAM" id="SSF53383">
    <property type="entry name" value="PLP-dependent transferases"/>
    <property type="match status" value="1"/>
</dbReference>
<dbReference type="PROSITE" id="PS00096">
    <property type="entry name" value="SHMT"/>
    <property type="match status" value="1"/>
</dbReference>
<protein>
    <recommendedName>
        <fullName evidence="1">Serine hydroxymethyltransferase</fullName>
        <shortName evidence="1">SHMT</shortName>
        <shortName evidence="1">Serine methylase</shortName>
        <ecNumber evidence="1 2">2.1.2.-</ecNumber>
    </recommendedName>
    <alternativeName>
        <fullName>L-allo-threonine aldolase</fullName>
        <ecNumber>4.1.2.49</ecNumber>
    </alternativeName>
</protein>
<reference key="1">
    <citation type="journal article" date="1996" name="Science">
        <title>Complete genome sequence of the methanogenic archaeon, Methanococcus jannaschii.</title>
        <authorList>
            <person name="Bult C.J."/>
            <person name="White O."/>
            <person name="Olsen G.J."/>
            <person name="Zhou L."/>
            <person name="Fleischmann R.D."/>
            <person name="Sutton G.G."/>
            <person name="Blake J.A."/>
            <person name="FitzGerald L.M."/>
            <person name="Clayton R.A."/>
            <person name="Gocayne J.D."/>
            <person name="Kerlavage A.R."/>
            <person name="Dougherty B.A."/>
            <person name="Tomb J.-F."/>
            <person name="Adams M.D."/>
            <person name="Reich C.I."/>
            <person name="Overbeek R."/>
            <person name="Kirkness E.F."/>
            <person name="Weinstock K.G."/>
            <person name="Merrick J.M."/>
            <person name="Glodek A."/>
            <person name="Scott J.L."/>
            <person name="Geoghagen N.S.M."/>
            <person name="Weidman J.F."/>
            <person name="Fuhrmann J.L."/>
            <person name="Nguyen D."/>
            <person name="Utterback T.R."/>
            <person name="Kelley J.M."/>
            <person name="Peterson J.D."/>
            <person name="Sadow P.W."/>
            <person name="Hanna M.C."/>
            <person name="Cotton M.D."/>
            <person name="Roberts K.M."/>
            <person name="Hurst M.A."/>
            <person name="Kaine B.P."/>
            <person name="Borodovsky M."/>
            <person name="Klenk H.-P."/>
            <person name="Fraser C.M."/>
            <person name="Smith H.O."/>
            <person name="Woese C.R."/>
            <person name="Venter J.C."/>
        </authorList>
    </citation>
    <scope>NUCLEOTIDE SEQUENCE [LARGE SCALE GENOMIC DNA]</scope>
    <source>
        <strain>ATCC 43067 / DSM 2661 / JAL-1 / JCM 10045 / NBRC 100440</strain>
    </source>
</reference>
<reference key="2">
    <citation type="journal article" date="2003" name="J. Biol. Chem.">
        <title>Catalytic and thermodynamic properties of tetrahydromethanopterin-dependent serine hydroxymethyltransferase from Methanococcus jannaschii.</title>
        <authorList>
            <person name="Angelaccio S."/>
            <person name="Chiaraluce R."/>
            <person name="Consalvi V."/>
            <person name="Buchenau B."/>
            <person name="Giangiacomo L."/>
            <person name="Bossa F."/>
            <person name="Contestabile R."/>
        </authorList>
    </citation>
    <scope>FUNCTION</scope>
    <scope>H4MPT-DEPENDENT SERINE HYDROXYMETHYLTRANSFERASE ACTIVITY</scope>
    <scope>CATALYTIC ACTIVITY</scope>
    <scope>ALDOLASE ACTIVITY</scope>
    <scope>COFACTOR</scope>
    <scope>SUBSTRATE SPECIFICITY</scope>
    <scope>BIOPHYSICOCHEMICAL PROPERTIES</scope>
    <scope>SUBUNIT</scope>
    <source>
        <strain>ATCC 43067 / DSM 2661 / JAL-1 / JCM 10045 / NBRC 100440</strain>
    </source>
</reference>
<proteinExistence type="evidence at protein level"/>